<reference key="1">
    <citation type="journal article" date="1979" name="FEBS Lett.">
        <title>The primary structure of ribosomal protein eL12/eL12-P from Artemia salina 80 S ribosomes.</title>
        <authorList>
            <person name="Amons R."/>
            <person name="Pluijms W.J.M."/>
            <person name="Moeller W."/>
        </authorList>
    </citation>
    <scope>PROTEIN SEQUENCE</scope>
    <scope>PHOSPHORYLATION AT SER-98</scope>
</reference>
<reference key="2">
    <citation type="journal article" date="1985" name="Eur. J. Biochem.">
        <title>Molecular cloning and analysis of cDNA sequences for two ribosomal proteins from Artemia. The coordinate expression of genes for ribosomal proteins and elongation factor 1 during embryogenesis of Artemia.</title>
        <authorList>
            <person name="Maassen J.A."/>
            <person name="Schop E.N."/>
            <person name="Brands J.H.G.M."/>
            <person name="van Hemert F.J."/>
            <person name="Lenstra J.A."/>
            <person name="Moeller W."/>
        </authorList>
    </citation>
    <scope>NUCLEOTIDE SEQUENCE [MRNA] OF 1-108</scope>
</reference>
<reference key="3">
    <citation type="journal article" date="2010" name="Mol. Cell. Proteomics">
        <title>Mass spectrometry defines the stoichiometry of ribosomal stalk complexes across the phylogenetic tree.</title>
        <authorList>
            <person name="Gordiyenko Y."/>
            <person name="Videler H."/>
            <person name="Zhou M."/>
            <person name="McKay A.R."/>
            <person name="Fucini P."/>
            <person name="Biegel E."/>
            <person name="Muller V."/>
            <person name="Robinson C.V."/>
        </authorList>
    </citation>
    <scope>SUBUNIT</scope>
    <scope>STOICHIOMETRY</scope>
    <scope>MASS SPECTROMETRY</scope>
</reference>
<name>RLA2_ARTSA</name>
<sequence length="111" mass="11503">MRYVAAYLLAALSGNADPSTADIEKILSSVGIECNPSQLQKVMNELKGKDLEALIAEGQTKLASMPTGGAPAAAAGGAATAPAAEAKEAKKEEKKEESEEEDEDMGFGLFD</sequence>
<comment type="function">
    <text>Plays an important role in the elongation step of protein synthesis.</text>
</comment>
<comment type="subunit">
    <text evidence="2">Part of the ribosomal stalk of the large ribosomal subunit; P1 and P2 exist as dimers which assemble on the P0 scaffold.</text>
</comment>
<comment type="mass spectrometry" mass="80479.25" error="9.3" method="Electrospray" evidence="2">
    <text>Isolated P0(P1/P2)4.</text>
</comment>
<comment type="mass spectrometry" mass="11522.16" error="0.7" method="Electrospray" evidence="2"/>
<comment type="similarity">
    <text evidence="4">Belongs to the eukaryotic ribosomal protein P1/P2 family.</text>
</comment>
<keyword id="KW-0903">Direct protein sequencing</keyword>
<keyword id="KW-0597">Phosphoprotein</keyword>
<keyword id="KW-0687">Ribonucleoprotein</keyword>
<keyword id="KW-0689">Ribosomal protein</keyword>
<evidence type="ECO:0000256" key="1">
    <source>
        <dbReference type="SAM" id="MobiDB-lite"/>
    </source>
</evidence>
<evidence type="ECO:0000269" key="2">
    <source>
    </source>
</evidence>
<evidence type="ECO:0000269" key="3">
    <source>
    </source>
</evidence>
<evidence type="ECO:0000305" key="4"/>
<dbReference type="EMBL" id="X02632">
    <property type="protein sequence ID" value="CAA26479.1"/>
    <property type="molecule type" value="mRNA"/>
</dbReference>
<dbReference type="PIR" id="A25208">
    <property type="entry name" value="R8SS12"/>
</dbReference>
<dbReference type="SMR" id="P02399"/>
<dbReference type="iPTMnet" id="P02399"/>
<dbReference type="GO" id="GO:0022625">
    <property type="term" value="C:cytosolic large ribosomal subunit"/>
    <property type="evidence" value="ECO:0007669"/>
    <property type="project" value="InterPro"/>
</dbReference>
<dbReference type="GO" id="GO:0003735">
    <property type="term" value="F:structural constituent of ribosome"/>
    <property type="evidence" value="ECO:0007669"/>
    <property type="project" value="InterPro"/>
</dbReference>
<dbReference type="GO" id="GO:0002182">
    <property type="term" value="P:cytoplasmic translational elongation"/>
    <property type="evidence" value="ECO:0007669"/>
    <property type="project" value="InterPro"/>
</dbReference>
<dbReference type="CDD" id="cd05833">
    <property type="entry name" value="Ribosomal_P2"/>
    <property type="match status" value="1"/>
</dbReference>
<dbReference type="FunFam" id="1.10.10.1410:FF:000002">
    <property type="entry name" value="60S acidic ribosomal protein P2"/>
    <property type="match status" value="1"/>
</dbReference>
<dbReference type="Gene3D" id="1.10.10.1410">
    <property type="match status" value="1"/>
</dbReference>
<dbReference type="HAMAP" id="MF_01478">
    <property type="entry name" value="Ribosomal_L12_arch"/>
    <property type="match status" value="1"/>
</dbReference>
<dbReference type="InterPro" id="IPR038716">
    <property type="entry name" value="P1/P2_N_sf"/>
</dbReference>
<dbReference type="InterPro" id="IPR027534">
    <property type="entry name" value="Ribosomal_P1/P2"/>
</dbReference>
<dbReference type="InterPro" id="IPR001859">
    <property type="entry name" value="Ribosomal_P1/P2_euk"/>
</dbReference>
<dbReference type="InterPro" id="IPR044076">
    <property type="entry name" value="Ribosomal_P2"/>
</dbReference>
<dbReference type="PANTHER" id="PTHR21141">
    <property type="entry name" value="60S ACIDIC RIBOSOMAL PROTEIN FAMILY MEMBER"/>
    <property type="match status" value="1"/>
</dbReference>
<dbReference type="PANTHER" id="PTHR21141:SF5">
    <property type="entry name" value="LARGE RIBOSOMAL SUBUNIT PROTEIN P2"/>
    <property type="match status" value="1"/>
</dbReference>
<dbReference type="Pfam" id="PF00428">
    <property type="entry name" value="Ribosomal_60s"/>
    <property type="match status" value="1"/>
</dbReference>
<dbReference type="PRINTS" id="PR00456">
    <property type="entry name" value="RIBOSOMALP2"/>
</dbReference>
<organism>
    <name type="scientific">Artemia salina</name>
    <name type="common">Brine shrimp</name>
    <dbReference type="NCBI Taxonomy" id="85549"/>
    <lineage>
        <taxon>Eukaryota</taxon>
        <taxon>Metazoa</taxon>
        <taxon>Ecdysozoa</taxon>
        <taxon>Arthropoda</taxon>
        <taxon>Crustacea</taxon>
        <taxon>Branchiopoda</taxon>
        <taxon>Anostraca</taxon>
        <taxon>Artemiidae</taxon>
        <taxon>Artemia</taxon>
    </lineage>
</organism>
<accession>P02399</accession>
<proteinExistence type="evidence at protein level"/>
<feature type="chain" id="PRO_0000157645" description="Large ribosomal subunit protein P2">
    <location>
        <begin position="1"/>
        <end position="111"/>
    </location>
</feature>
<feature type="region of interest" description="Disordered" evidence="1">
    <location>
        <begin position="63"/>
        <end position="111"/>
    </location>
</feature>
<feature type="compositionally biased region" description="Low complexity" evidence="1">
    <location>
        <begin position="63"/>
        <end position="84"/>
    </location>
</feature>
<feature type="compositionally biased region" description="Basic and acidic residues" evidence="1">
    <location>
        <begin position="85"/>
        <end position="97"/>
    </location>
</feature>
<feature type="modified residue" description="Phosphoserine" evidence="3">
    <location>
        <position position="98"/>
    </location>
</feature>
<feature type="sequence conflict" description="In Ref. 1; AA sequence." evidence="4" ref="1">
    <original>S</original>
    <variation>T</variation>
    <location>
        <position position="19"/>
    </location>
</feature>
<feature type="sequence conflict" description="In Ref. 1; AA sequence." evidence="4" ref="1">
    <original>T</original>
    <variation>A</variation>
    <location>
        <position position="80"/>
    </location>
</feature>
<protein>
    <recommendedName>
        <fullName evidence="4">Large ribosomal subunit protein P2</fullName>
    </recommendedName>
    <alternativeName>
        <fullName>60S acidic ribosomal protein P2</fullName>
    </alternativeName>
    <alternativeName>
        <fullName>EL12</fullName>
    </alternativeName>
</protein>